<keyword id="KW-1185">Reference proteome</keyword>
<keyword id="KW-0678">Repressor</keyword>
<keyword id="KW-0687">Ribonucleoprotein</keyword>
<keyword id="KW-0689">Ribosomal protein</keyword>
<keyword id="KW-0694">RNA-binding</keyword>
<keyword id="KW-0699">rRNA-binding</keyword>
<keyword id="KW-0810">Translation regulation</keyword>
<keyword id="KW-0820">tRNA-binding</keyword>
<dbReference type="EMBL" id="AM406670">
    <property type="protein sequence ID" value="CAL96043.1"/>
    <property type="molecule type" value="Genomic_DNA"/>
</dbReference>
<dbReference type="RefSeq" id="WP_011767150.1">
    <property type="nucleotide sequence ID" value="NC_008702.1"/>
</dbReference>
<dbReference type="SMR" id="A1KB37"/>
<dbReference type="STRING" id="62928.azo3427"/>
<dbReference type="KEGG" id="aoa:dqs_3566"/>
<dbReference type="KEGG" id="azo:azo3427"/>
<dbReference type="eggNOG" id="COG0081">
    <property type="taxonomic scope" value="Bacteria"/>
</dbReference>
<dbReference type="HOGENOM" id="CLU_062853_0_0_4"/>
<dbReference type="OrthoDB" id="9803740at2"/>
<dbReference type="Proteomes" id="UP000002588">
    <property type="component" value="Chromosome"/>
</dbReference>
<dbReference type="GO" id="GO:0022625">
    <property type="term" value="C:cytosolic large ribosomal subunit"/>
    <property type="evidence" value="ECO:0007669"/>
    <property type="project" value="TreeGrafter"/>
</dbReference>
<dbReference type="GO" id="GO:0019843">
    <property type="term" value="F:rRNA binding"/>
    <property type="evidence" value="ECO:0007669"/>
    <property type="project" value="UniProtKB-UniRule"/>
</dbReference>
<dbReference type="GO" id="GO:0003735">
    <property type="term" value="F:structural constituent of ribosome"/>
    <property type="evidence" value="ECO:0007669"/>
    <property type="project" value="InterPro"/>
</dbReference>
<dbReference type="GO" id="GO:0000049">
    <property type="term" value="F:tRNA binding"/>
    <property type="evidence" value="ECO:0007669"/>
    <property type="project" value="UniProtKB-KW"/>
</dbReference>
<dbReference type="GO" id="GO:0006417">
    <property type="term" value="P:regulation of translation"/>
    <property type="evidence" value="ECO:0007669"/>
    <property type="project" value="UniProtKB-KW"/>
</dbReference>
<dbReference type="GO" id="GO:0006412">
    <property type="term" value="P:translation"/>
    <property type="evidence" value="ECO:0007669"/>
    <property type="project" value="UniProtKB-UniRule"/>
</dbReference>
<dbReference type="CDD" id="cd00403">
    <property type="entry name" value="Ribosomal_L1"/>
    <property type="match status" value="1"/>
</dbReference>
<dbReference type="FunFam" id="3.40.50.790:FF:000001">
    <property type="entry name" value="50S ribosomal protein L1"/>
    <property type="match status" value="1"/>
</dbReference>
<dbReference type="Gene3D" id="3.30.190.20">
    <property type="match status" value="1"/>
</dbReference>
<dbReference type="Gene3D" id="3.40.50.790">
    <property type="match status" value="1"/>
</dbReference>
<dbReference type="HAMAP" id="MF_01318_B">
    <property type="entry name" value="Ribosomal_uL1_B"/>
    <property type="match status" value="1"/>
</dbReference>
<dbReference type="InterPro" id="IPR005878">
    <property type="entry name" value="Ribosom_uL1_bac-type"/>
</dbReference>
<dbReference type="InterPro" id="IPR002143">
    <property type="entry name" value="Ribosomal_uL1"/>
</dbReference>
<dbReference type="InterPro" id="IPR023674">
    <property type="entry name" value="Ribosomal_uL1-like"/>
</dbReference>
<dbReference type="InterPro" id="IPR028364">
    <property type="entry name" value="Ribosomal_uL1/biogenesis"/>
</dbReference>
<dbReference type="InterPro" id="IPR016095">
    <property type="entry name" value="Ribosomal_uL1_3-a/b-sand"/>
</dbReference>
<dbReference type="InterPro" id="IPR023673">
    <property type="entry name" value="Ribosomal_uL1_CS"/>
</dbReference>
<dbReference type="NCBIfam" id="TIGR01169">
    <property type="entry name" value="rplA_bact"/>
    <property type="match status" value="1"/>
</dbReference>
<dbReference type="PANTHER" id="PTHR36427">
    <property type="entry name" value="54S RIBOSOMAL PROTEIN L1, MITOCHONDRIAL"/>
    <property type="match status" value="1"/>
</dbReference>
<dbReference type="PANTHER" id="PTHR36427:SF3">
    <property type="entry name" value="LARGE RIBOSOMAL SUBUNIT PROTEIN UL1M"/>
    <property type="match status" value="1"/>
</dbReference>
<dbReference type="Pfam" id="PF00687">
    <property type="entry name" value="Ribosomal_L1"/>
    <property type="match status" value="1"/>
</dbReference>
<dbReference type="PIRSF" id="PIRSF002155">
    <property type="entry name" value="Ribosomal_L1"/>
    <property type="match status" value="1"/>
</dbReference>
<dbReference type="SUPFAM" id="SSF56808">
    <property type="entry name" value="Ribosomal protein L1"/>
    <property type="match status" value="1"/>
</dbReference>
<dbReference type="PROSITE" id="PS01199">
    <property type="entry name" value="RIBOSOMAL_L1"/>
    <property type="match status" value="1"/>
</dbReference>
<feature type="chain" id="PRO_0000307960" description="Large ribosomal subunit protein uL1">
    <location>
        <begin position="1"/>
        <end position="231"/>
    </location>
</feature>
<comment type="function">
    <text evidence="1">Binds directly to 23S rRNA. The L1 stalk is quite mobile in the ribosome, and is involved in E site tRNA release.</text>
</comment>
<comment type="function">
    <text evidence="1">Protein L1 is also a translational repressor protein, it controls the translation of the L11 operon by binding to its mRNA.</text>
</comment>
<comment type="subunit">
    <text evidence="1">Part of the 50S ribosomal subunit.</text>
</comment>
<comment type="similarity">
    <text evidence="1">Belongs to the universal ribosomal protein uL1 family.</text>
</comment>
<proteinExistence type="inferred from homology"/>
<gene>
    <name evidence="1" type="primary">rplA</name>
    <name type="ordered locus">azo3427</name>
</gene>
<sequence length="231" mass="24042">MAKISKRVQALRAKVDRNRIYPVAEALALVKECATAKFDESIDVAVNLGVDARKSDQVVRGSVVLPAGTGKTVRVAVFAQGDKAEAARAAGADVVGFDDLAEQVKGGTIDFDLCIATPDAMRVVGQLGQILGPRGLMPNPKVGTVTMDVTTAVKNAKAGQVQYRTDKGGLVHATIGRASFGVEALQQNLNAFIEALVKARPAAAKGVYLRRVAVSSTMGAGVRVEPTTASA</sequence>
<accession>A1KB37</accession>
<name>RL1_AZOSB</name>
<evidence type="ECO:0000255" key="1">
    <source>
        <dbReference type="HAMAP-Rule" id="MF_01318"/>
    </source>
</evidence>
<evidence type="ECO:0000305" key="2"/>
<organism>
    <name type="scientific">Azoarcus sp. (strain BH72)</name>
    <dbReference type="NCBI Taxonomy" id="418699"/>
    <lineage>
        <taxon>Bacteria</taxon>
        <taxon>Pseudomonadati</taxon>
        <taxon>Pseudomonadota</taxon>
        <taxon>Betaproteobacteria</taxon>
        <taxon>Rhodocyclales</taxon>
        <taxon>Zoogloeaceae</taxon>
        <taxon>Azoarcus</taxon>
    </lineage>
</organism>
<protein>
    <recommendedName>
        <fullName evidence="1">Large ribosomal subunit protein uL1</fullName>
    </recommendedName>
    <alternativeName>
        <fullName evidence="2">50S ribosomal protein L1</fullName>
    </alternativeName>
</protein>
<reference key="1">
    <citation type="journal article" date="2006" name="Nat. Biotechnol.">
        <title>Complete genome of the mutualistic, N2-fixing grass endophyte Azoarcus sp. strain BH72.</title>
        <authorList>
            <person name="Krause A."/>
            <person name="Ramakumar A."/>
            <person name="Bartels D."/>
            <person name="Battistoni F."/>
            <person name="Bekel T."/>
            <person name="Boch J."/>
            <person name="Boehm M."/>
            <person name="Friedrich F."/>
            <person name="Hurek T."/>
            <person name="Krause L."/>
            <person name="Linke B."/>
            <person name="McHardy A.C."/>
            <person name="Sarkar A."/>
            <person name="Schneiker S."/>
            <person name="Syed A.A."/>
            <person name="Thauer R."/>
            <person name="Vorhoelter F.-J."/>
            <person name="Weidner S."/>
            <person name="Puehler A."/>
            <person name="Reinhold-Hurek B."/>
            <person name="Kaiser O."/>
            <person name="Goesmann A."/>
        </authorList>
    </citation>
    <scope>NUCLEOTIDE SEQUENCE [LARGE SCALE GENOMIC DNA]</scope>
    <source>
        <strain>BH72</strain>
    </source>
</reference>